<comment type="function">
    <text evidence="1">The UvrABC repair system catalyzes the recognition and processing of DNA lesions. UvrC both incises the 5' and 3' sides of the lesion. The N-terminal half is responsible for the 3' incision and the C-terminal half is responsible for the 5' incision.</text>
</comment>
<comment type="subunit">
    <text evidence="1">Interacts with UvrB in an incision complex.</text>
</comment>
<comment type="subcellular location">
    <subcellularLocation>
        <location evidence="1">Cytoplasm</location>
    </subcellularLocation>
</comment>
<comment type="similarity">
    <text evidence="1">Belongs to the UvrC family.</text>
</comment>
<name>UVRC_MYCLE</name>
<gene>
    <name evidence="1" type="primary">uvrC</name>
    <name type="ordered locus">ML0562</name>
</gene>
<dbReference type="EMBL" id="AL583918">
    <property type="protein sequence ID" value="CAC30070.1"/>
    <property type="molecule type" value="Genomic_DNA"/>
</dbReference>
<dbReference type="PIR" id="B86979">
    <property type="entry name" value="B86979"/>
</dbReference>
<dbReference type="RefSeq" id="NP_301476.1">
    <property type="nucleotide sequence ID" value="NC_002677.1"/>
</dbReference>
<dbReference type="RefSeq" id="WP_010907800.1">
    <property type="nucleotide sequence ID" value="NC_002677.1"/>
</dbReference>
<dbReference type="SMR" id="Q9CCP1"/>
<dbReference type="STRING" id="272631.gene:17574383"/>
<dbReference type="KEGG" id="mle:ML0562"/>
<dbReference type="PATRIC" id="fig|272631.5.peg.973"/>
<dbReference type="Leproma" id="ML0562"/>
<dbReference type="eggNOG" id="COG0322">
    <property type="taxonomic scope" value="Bacteria"/>
</dbReference>
<dbReference type="HOGENOM" id="CLU_014841_1_1_11"/>
<dbReference type="OrthoDB" id="9804933at2"/>
<dbReference type="Proteomes" id="UP000000806">
    <property type="component" value="Chromosome"/>
</dbReference>
<dbReference type="GO" id="GO:0005737">
    <property type="term" value="C:cytoplasm"/>
    <property type="evidence" value="ECO:0007669"/>
    <property type="project" value="UniProtKB-SubCell"/>
</dbReference>
<dbReference type="GO" id="GO:0009380">
    <property type="term" value="C:excinuclease repair complex"/>
    <property type="evidence" value="ECO:0007669"/>
    <property type="project" value="InterPro"/>
</dbReference>
<dbReference type="GO" id="GO:0003677">
    <property type="term" value="F:DNA binding"/>
    <property type="evidence" value="ECO:0007669"/>
    <property type="project" value="UniProtKB-UniRule"/>
</dbReference>
<dbReference type="GO" id="GO:0009381">
    <property type="term" value="F:excinuclease ABC activity"/>
    <property type="evidence" value="ECO:0007669"/>
    <property type="project" value="UniProtKB-UniRule"/>
</dbReference>
<dbReference type="GO" id="GO:0006289">
    <property type="term" value="P:nucleotide-excision repair"/>
    <property type="evidence" value="ECO:0007669"/>
    <property type="project" value="UniProtKB-UniRule"/>
</dbReference>
<dbReference type="GO" id="GO:0009432">
    <property type="term" value="P:SOS response"/>
    <property type="evidence" value="ECO:0007669"/>
    <property type="project" value="UniProtKB-UniRule"/>
</dbReference>
<dbReference type="CDD" id="cd10434">
    <property type="entry name" value="GIY-YIG_UvrC_Cho"/>
    <property type="match status" value="1"/>
</dbReference>
<dbReference type="FunFam" id="3.30.420.340:FF:000003">
    <property type="entry name" value="UvrABC system protein C"/>
    <property type="match status" value="1"/>
</dbReference>
<dbReference type="FunFam" id="3.40.1440.10:FF:000001">
    <property type="entry name" value="UvrABC system protein C"/>
    <property type="match status" value="1"/>
</dbReference>
<dbReference type="Gene3D" id="1.10.150.20">
    <property type="entry name" value="5' to 3' exonuclease, C-terminal subdomain"/>
    <property type="match status" value="1"/>
</dbReference>
<dbReference type="Gene3D" id="3.40.1440.10">
    <property type="entry name" value="GIY-YIG endonuclease"/>
    <property type="match status" value="1"/>
</dbReference>
<dbReference type="Gene3D" id="4.10.860.10">
    <property type="entry name" value="UVR domain"/>
    <property type="match status" value="1"/>
</dbReference>
<dbReference type="Gene3D" id="3.30.420.340">
    <property type="entry name" value="UvrC, RNAse H endonuclease domain"/>
    <property type="match status" value="1"/>
</dbReference>
<dbReference type="HAMAP" id="MF_00203">
    <property type="entry name" value="UvrC"/>
    <property type="match status" value="1"/>
</dbReference>
<dbReference type="InterPro" id="IPR000305">
    <property type="entry name" value="GIY-YIG_endonuc"/>
</dbReference>
<dbReference type="InterPro" id="IPR035901">
    <property type="entry name" value="GIY-YIG_endonuc_sf"/>
</dbReference>
<dbReference type="InterPro" id="IPR047296">
    <property type="entry name" value="GIY-YIG_UvrC_Cho"/>
</dbReference>
<dbReference type="InterPro" id="IPR003583">
    <property type="entry name" value="Hlx-hairpin-Hlx_DNA-bd_motif"/>
</dbReference>
<dbReference type="InterPro" id="IPR010994">
    <property type="entry name" value="RuvA_2-like"/>
</dbReference>
<dbReference type="InterPro" id="IPR001943">
    <property type="entry name" value="UVR_dom"/>
</dbReference>
<dbReference type="InterPro" id="IPR036876">
    <property type="entry name" value="UVR_dom_sf"/>
</dbReference>
<dbReference type="InterPro" id="IPR050066">
    <property type="entry name" value="UvrABC_protein_C"/>
</dbReference>
<dbReference type="InterPro" id="IPR004791">
    <property type="entry name" value="UvrC"/>
</dbReference>
<dbReference type="InterPro" id="IPR001162">
    <property type="entry name" value="UvrC_RNase_H_dom"/>
</dbReference>
<dbReference type="InterPro" id="IPR038476">
    <property type="entry name" value="UvrC_RNase_H_dom_sf"/>
</dbReference>
<dbReference type="NCBIfam" id="NF001824">
    <property type="entry name" value="PRK00558.1-5"/>
    <property type="match status" value="1"/>
</dbReference>
<dbReference type="NCBIfam" id="TIGR00194">
    <property type="entry name" value="uvrC"/>
    <property type="match status" value="1"/>
</dbReference>
<dbReference type="PANTHER" id="PTHR30562:SF1">
    <property type="entry name" value="UVRABC SYSTEM PROTEIN C"/>
    <property type="match status" value="1"/>
</dbReference>
<dbReference type="PANTHER" id="PTHR30562">
    <property type="entry name" value="UVRC/OXIDOREDUCTASE"/>
    <property type="match status" value="1"/>
</dbReference>
<dbReference type="Pfam" id="PF01541">
    <property type="entry name" value="GIY-YIG"/>
    <property type="match status" value="1"/>
</dbReference>
<dbReference type="Pfam" id="PF14520">
    <property type="entry name" value="HHH_5"/>
    <property type="match status" value="1"/>
</dbReference>
<dbReference type="Pfam" id="PF02151">
    <property type="entry name" value="UVR"/>
    <property type="match status" value="1"/>
</dbReference>
<dbReference type="Pfam" id="PF22920">
    <property type="entry name" value="UvrC_RNaseH"/>
    <property type="match status" value="1"/>
</dbReference>
<dbReference type="Pfam" id="PF08459">
    <property type="entry name" value="UvrC_RNaseH_dom"/>
    <property type="match status" value="1"/>
</dbReference>
<dbReference type="SMART" id="SM00465">
    <property type="entry name" value="GIYc"/>
    <property type="match status" value="1"/>
</dbReference>
<dbReference type="SMART" id="SM00278">
    <property type="entry name" value="HhH1"/>
    <property type="match status" value="2"/>
</dbReference>
<dbReference type="SUPFAM" id="SSF46600">
    <property type="entry name" value="C-terminal UvrC-binding domain of UvrB"/>
    <property type="match status" value="1"/>
</dbReference>
<dbReference type="SUPFAM" id="SSF82771">
    <property type="entry name" value="GIY-YIG endonuclease"/>
    <property type="match status" value="1"/>
</dbReference>
<dbReference type="SUPFAM" id="SSF47781">
    <property type="entry name" value="RuvA domain 2-like"/>
    <property type="match status" value="1"/>
</dbReference>
<dbReference type="PROSITE" id="PS50164">
    <property type="entry name" value="GIY_YIG"/>
    <property type="match status" value="1"/>
</dbReference>
<dbReference type="PROSITE" id="PS50151">
    <property type="entry name" value="UVR"/>
    <property type="match status" value="1"/>
</dbReference>
<dbReference type="PROSITE" id="PS50165">
    <property type="entry name" value="UVRC"/>
    <property type="match status" value="1"/>
</dbReference>
<sequence>MPDPATYRPATGSIPVEPGVYRFRDPYGRVIYVGKAKSLRSRLASYFADVANLHPRTRQMVTIAAKVEWTVVNTEVEALQLEYNWIKEFDPRFNIRYRDDKSYPVLAVTLGEEFPRLMVYRGPRRKGVRYFGPYSHAWAIRETLDLLTRVFPARTCSPGVFKRHKQIDRPCLLGYIDKCAAPCVGRVGAEQHSQIVADFCDFLSGKTDRYARDLERKMSAAAEQLDFERAARLRDDLFALKRAMEKQAVVFGDGTDADVVAFAYDELEVAVQVFHVRGGRVRGQRGWIVEKSDDPGDTGEEQLVEQFLAQFYGEQAELDFVADESANPVPREVLVPCLPSNADELASWLSGLRGSRVALRVPRRGDKRALAETVQRNAKEELQQHKLKRASDFNSRSAALQNIQDTLGLSYAPLRIECVDISHVQGTDVVGSLVVFEDGLPRKSDYRHFGIRKAAGNGRSDDVASIAEVTRRRFLQHLHDQNDTNLLSPEGKSHRFAYPPNLYVVDGGAPQVNAASTVLEELGIIDVAVIGLAKRLEEVWVPFEPYPVIMPRNSEALFLLQRVRDEAHRFAITYHRSKRSKRMTASALDSVPGLGAHRRKALVTHFGSIARLKDATVEQITAVPGIGVATATAVLEALRPDSSEASE</sequence>
<accession>Q9CCP1</accession>
<protein>
    <recommendedName>
        <fullName evidence="1">UvrABC system protein C</fullName>
        <shortName evidence="1">Protein UvrC</shortName>
    </recommendedName>
    <alternativeName>
        <fullName evidence="1">Excinuclease ABC subunit C</fullName>
    </alternativeName>
</protein>
<proteinExistence type="inferred from homology"/>
<organism>
    <name type="scientific">Mycobacterium leprae (strain TN)</name>
    <dbReference type="NCBI Taxonomy" id="272631"/>
    <lineage>
        <taxon>Bacteria</taxon>
        <taxon>Bacillati</taxon>
        <taxon>Actinomycetota</taxon>
        <taxon>Actinomycetes</taxon>
        <taxon>Mycobacteriales</taxon>
        <taxon>Mycobacteriaceae</taxon>
        <taxon>Mycobacterium</taxon>
    </lineage>
</organism>
<keyword id="KW-0963">Cytoplasm</keyword>
<keyword id="KW-0227">DNA damage</keyword>
<keyword id="KW-0228">DNA excision</keyword>
<keyword id="KW-0234">DNA repair</keyword>
<keyword id="KW-0267">Excision nuclease</keyword>
<keyword id="KW-1185">Reference proteome</keyword>
<keyword id="KW-0742">SOS response</keyword>
<feature type="chain" id="PRO_0000138319" description="UvrABC system protein C">
    <location>
        <begin position="1"/>
        <end position="647"/>
    </location>
</feature>
<feature type="domain" description="GIY-YIG" evidence="1">
    <location>
        <begin position="16"/>
        <end position="95"/>
    </location>
</feature>
<feature type="domain" description="UVR" evidence="1">
    <location>
        <begin position="208"/>
        <end position="243"/>
    </location>
</feature>
<evidence type="ECO:0000255" key="1">
    <source>
        <dbReference type="HAMAP-Rule" id="MF_00203"/>
    </source>
</evidence>
<reference key="1">
    <citation type="journal article" date="2001" name="Nature">
        <title>Massive gene decay in the leprosy bacillus.</title>
        <authorList>
            <person name="Cole S.T."/>
            <person name="Eiglmeier K."/>
            <person name="Parkhill J."/>
            <person name="James K.D."/>
            <person name="Thomson N.R."/>
            <person name="Wheeler P.R."/>
            <person name="Honore N."/>
            <person name="Garnier T."/>
            <person name="Churcher C.M."/>
            <person name="Harris D.E."/>
            <person name="Mungall K.L."/>
            <person name="Basham D."/>
            <person name="Brown D."/>
            <person name="Chillingworth T."/>
            <person name="Connor R."/>
            <person name="Davies R.M."/>
            <person name="Devlin K."/>
            <person name="Duthoy S."/>
            <person name="Feltwell T."/>
            <person name="Fraser A."/>
            <person name="Hamlin N."/>
            <person name="Holroyd S."/>
            <person name="Hornsby T."/>
            <person name="Jagels K."/>
            <person name="Lacroix C."/>
            <person name="Maclean J."/>
            <person name="Moule S."/>
            <person name="Murphy L.D."/>
            <person name="Oliver K."/>
            <person name="Quail M.A."/>
            <person name="Rajandream M.A."/>
            <person name="Rutherford K.M."/>
            <person name="Rutter S."/>
            <person name="Seeger K."/>
            <person name="Simon S."/>
            <person name="Simmonds M."/>
            <person name="Skelton J."/>
            <person name="Squares R."/>
            <person name="Squares S."/>
            <person name="Stevens K."/>
            <person name="Taylor K."/>
            <person name="Whitehead S."/>
            <person name="Woodward J.R."/>
            <person name="Barrell B.G."/>
        </authorList>
    </citation>
    <scope>NUCLEOTIDE SEQUENCE [LARGE SCALE GENOMIC DNA]</scope>
    <source>
        <strain>TN</strain>
    </source>
</reference>